<keyword id="KW-0687">Ribonucleoprotein</keyword>
<keyword id="KW-0689">Ribosomal protein</keyword>
<keyword id="KW-0694">RNA-binding</keyword>
<keyword id="KW-0699">rRNA-binding</keyword>
<evidence type="ECO:0000255" key="1">
    <source>
        <dbReference type="HAMAP-Rule" id="MF_00382"/>
    </source>
</evidence>
<evidence type="ECO:0000305" key="2"/>
<name>RL20_VIBME</name>
<organism>
    <name type="scientific">Vibrio metschnikovii</name>
    <dbReference type="NCBI Taxonomy" id="28172"/>
    <lineage>
        <taxon>Bacteria</taxon>
        <taxon>Pseudomonadati</taxon>
        <taxon>Pseudomonadota</taxon>
        <taxon>Gammaproteobacteria</taxon>
        <taxon>Vibrionales</taxon>
        <taxon>Vibrionaceae</taxon>
        <taxon>Vibrio</taxon>
    </lineage>
</organism>
<protein>
    <recommendedName>
        <fullName evidence="1">Large ribosomal subunit protein bL20</fullName>
    </recommendedName>
    <alternativeName>
        <fullName evidence="2">50S ribosomal protein L20</fullName>
    </alternativeName>
</protein>
<comment type="function">
    <text evidence="1">Binds directly to 23S ribosomal RNA and is necessary for the in vitro assembly process of the 50S ribosomal subunit. It is not involved in the protein synthesizing functions of that subunit.</text>
</comment>
<comment type="similarity">
    <text evidence="1">Belongs to the bacterial ribosomal protein bL20 family.</text>
</comment>
<reference key="1">
    <citation type="journal article" date="2001" name="Proc. Natl. Acad. Sci. U.S.A.">
        <title>The evolutionary history of chromosomal super-integrons provides an ancestry for multi-resistant integrons.</title>
        <authorList>
            <person name="Rowe-Magnus D.A."/>
            <person name="Guerout A.-M."/>
            <person name="Ploncard P."/>
            <person name="Dychinco B."/>
            <person name="Davies J."/>
            <person name="Mazel D."/>
        </authorList>
    </citation>
    <scope>NUCLEOTIDE SEQUENCE [GENOMIC DNA]</scope>
    <source>
        <strain>CIP A267</strain>
    </source>
</reference>
<dbReference type="EMBL" id="AY014398">
    <property type="protein sequence ID" value="AAK02073.1"/>
    <property type="molecule type" value="Genomic_DNA"/>
</dbReference>
<dbReference type="SMR" id="Q9ALJ1"/>
<dbReference type="GO" id="GO:1990904">
    <property type="term" value="C:ribonucleoprotein complex"/>
    <property type="evidence" value="ECO:0007669"/>
    <property type="project" value="UniProtKB-KW"/>
</dbReference>
<dbReference type="GO" id="GO:0005840">
    <property type="term" value="C:ribosome"/>
    <property type="evidence" value="ECO:0007669"/>
    <property type="project" value="UniProtKB-KW"/>
</dbReference>
<dbReference type="GO" id="GO:0019843">
    <property type="term" value="F:rRNA binding"/>
    <property type="evidence" value="ECO:0007669"/>
    <property type="project" value="UniProtKB-UniRule"/>
</dbReference>
<dbReference type="GO" id="GO:0003735">
    <property type="term" value="F:structural constituent of ribosome"/>
    <property type="evidence" value="ECO:0007669"/>
    <property type="project" value="InterPro"/>
</dbReference>
<dbReference type="GO" id="GO:0000027">
    <property type="term" value="P:ribosomal large subunit assembly"/>
    <property type="evidence" value="ECO:0007669"/>
    <property type="project" value="UniProtKB-UniRule"/>
</dbReference>
<dbReference type="GO" id="GO:0006412">
    <property type="term" value="P:translation"/>
    <property type="evidence" value="ECO:0007669"/>
    <property type="project" value="InterPro"/>
</dbReference>
<dbReference type="CDD" id="cd07026">
    <property type="entry name" value="Ribosomal_L20"/>
    <property type="match status" value="1"/>
</dbReference>
<dbReference type="FunFam" id="1.10.1900.20:FF:000001">
    <property type="entry name" value="50S ribosomal protein L20"/>
    <property type="match status" value="1"/>
</dbReference>
<dbReference type="Gene3D" id="6.10.160.10">
    <property type="match status" value="1"/>
</dbReference>
<dbReference type="Gene3D" id="1.10.1900.20">
    <property type="entry name" value="Ribosomal protein L20"/>
    <property type="match status" value="1"/>
</dbReference>
<dbReference type="HAMAP" id="MF_00382">
    <property type="entry name" value="Ribosomal_bL20"/>
    <property type="match status" value="1"/>
</dbReference>
<dbReference type="InterPro" id="IPR005813">
    <property type="entry name" value="Ribosomal_bL20"/>
</dbReference>
<dbReference type="InterPro" id="IPR049946">
    <property type="entry name" value="RIBOSOMAL_L20_CS"/>
</dbReference>
<dbReference type="InterPro" id="IPR035566">
    <property type="entry name" value="Ribosomal_protein_bL20_C"/>
</dbReference>
<dbReference type="NCBIfam" id="TIGR01032">
    <property type="entry name" value="rplT_bact"/>
    <property type="match status" value="1"/>
</dbReference>
<dbReference type="PANTHER" id="PTHR10986">
    <property type="entry name" value="39S RIBOSOMAL PROTEIN L20"/>
    <property type="match status" value="1"/>
</dbReference>
<dbReference type="Pfam" id="PF00453">
    <property type="entry name" value="Ribosomal_L20"/>
    <property type="match status" value="1"/>
</dbReference>
<dbReference type="PRINTS" id="PR00062">
    <property type="entry name" value="RIBOSOMALL20"/>
</dbReference>
<dbReference type="SUPFAM" id="SSF74731">
    <property type="entry name" value="Ribosomal protein L20"/>
    <property type="match status" value="1"/>
</dbReference>
<dbReference type="PROSITE" id="PS00937">
    <property type="entry name" value="RIBOSOMAL_L20"/>
    <property type="match status" value="1"/>
</dbReference>
<proteinExistence type="inferred from homology"/>
<feature type="chain" id="PRO_0000177259" description="Large ribosomal subunit protein bL20">
    <location>
        <begin position="1"/>
        <end position="117"/>
    </location>
</feature>
<accession>Q9ALJ1</accession>
<sequence length="117" mass="13444">MPRVKRGVQARARHKKILKQAKGYYGARSRVYRVAFQAVTKAGQYAYRDRRTKKRQFRQLWIARINAASRQNGLSYSRFINGLKKASIEIDRKILADIAVFDKAAFSVLVEKAKAAL</sequence>
<gene>
    <name evidence="1" type="primary">rplT</name>
</gene>